<comment type="function">
    <text evidence="1">Essential cell division protein that stabilizes the FtsZ protofilaments by cross-linking them and that serves as a cytoplasmic membrane anchor for the Z ring. Also required for the recruitment to the septal ring of downstream cell division proteins.</text>
</comment>
<comment type="subunit">
    <text evidence="1">Interacts with FtsZ via their C-terminal domains.</text>
</comment>
<comment type="subcellular location">
    <subcellularLocation>
        <location evidence="1">Cell inner membrane</location>
        <topology evidence="1">Single-pass type I membrane protein</topology>
    </subcellularLocation>
    <text evidence="1">Localizes to the Z ring in an FtsZ-dependent manner.</text>
</comment>
<comment type="similarity">
    <text evidence="1">Belongs to the ZipA family.</text>
</comment>
<feature type="chain" id="PRO_1000127221" description="Cell division protein ZipA">
    <location>
        <begin position="1"/>
        <end position="354"/>
    </location>
</feature>
<feature type="topological domain" description="Periplasmic" evidence="1">
    <location>
        <begin position="1"/>
        <end position="6"/>
    </location>
</feature>
<feature type="transmembrane region" description="Helical" evidence="1">
    <location>
        <begin position="7"/>
        <end position="27"/>
    </location>
</feature>
<feature type="topological domain" description="Cytoplasmic" evidence="1">
    <location>
        <begin position="28"/>
        <end position="354"/>
    </location>
</feature>
<feature type="region of interest" description="Disordered" evidence="2">
    <location>
        <begin position="41"/>
        <end position="215"/>
    </location>
</feature>
<feature type="compositionally biased region" description="Acidic residues" evidence="2">
    <location>
        <begin position="49"/>
        <end position="60"/>
    </location>
</feature>
<feature type="compositionally biased region" description="Low complexity" evidence="2">
    <location>
        <begin position="120"/>
        <end position="144"/>
    </location>
</feature>
<feature type="compositionally biased region" description="Low complexity" evidence="2">
    <location>
        <begin position="152"/>
        <end position="164"/>
    </location>
</feature>
<feature type="compositionally biased region" description="Pro residues" evidence="2">
    <location>
        <begin position="178"/>
        <end position="191"/>
    </location>
</feature>
<feature type="compositionally biased region" description="Pro residues" evidence="2">
    <location>
        <begin position="201"/>
        <end position="210"/>
    </location>
</feature>
<gene>
    <name evidence="1" type="primary">zipA</name>
    <name type="ordered locus">KPK_1380</name>
</gene>
<accession>B5XVT3</accession>
<proteinExistence type="inferred from homology"/>
<dbReference type="EMBL" id="CP000964">
    <property type="protein sequence ID" value="ACI07365.1"/>
    <property type="molecule type" value="Genomic_DNA"/>
</dbReference>
<dbReference type="SMR" id="B5XVT3"/>
<dbReference type="KEGG" id="kpe:KPK_1380"/>
<dbReference type="HOGENOM" id="CLU_030174_1_0_6"/>
<dbReference type="Proteomes" id="UP000001734">
    <property type="component" value="Chromosome"/>
</dbReference>
<dbReference type="GO" id="GO:0032153">
    <property type="term" value="C:cell division site"/>
    <property type="evidence" value="ECO:0007669"/>
    <property type="project" value="UniProtKB-UniRule"/>
</dbReference>
<dbReference type="GO" id="GO:0005886">
    <property type="term" value="C:plasma membrane"/>
    <property type="evidence" value="ECO:0007669"/>
    <property type="project" value="UniProtKB-SubCell"/>
</dbReference>
<dbReference type="GO" id="GO:0000917">
    <property type="term" value="P:division septum assembly"/>
    <property type="evidence" value="ECO:0007669"/>
    <property type="project" value="TreeGrafter"/>
</dbReference>
<dbReference type="GO" id="GO:0043093">
    <property type="term" value="P:FtsZ-dependent cytokinesis"/>
    <property type="evidence" value="ECO:0007669"/>
    <property type="project" value="UniProtKB-UniRule"/>
</dbReference>
<dbReference type="CDD" id="cd00231">
    <property type="entry name" value="ZipA"/>
    <property type="match status" value="1"/>
</dbReference>
<dbReference type="FunFam" id="3.30.1400.10:FF:000001">
    <property type="entry name" value="Cell division protein ZipA"/>
    <property type="match status" value="1"/>
</dbReference>
<dbReference type="Gene3D" id="3.30.1400.10">
    <property type="entry name" value="ZipA, C-terminal FtsZ-binding domain"/>
    <property type="match status" value="1"/>
</dbReference>
<dbReference type="HAMAP" id="MF_00509">
    <property type="entry name" value="ZipA"/>
    <property type="match status" value="1"/>
</dbReference>
<dbReference type="InterPro" id="IPR011919">
    <property type="entry name" value="Cell_div_ZipA"/>
</dbReference>
<dbReference type="InterPro" id="IPR007449">
    <property type="entry name" value="ZipA_FtsZ-bd_C"/>
</dbReference>
<dbReference type="InterPro" id="IPR036765">
    <property type="entry name" value="ZipA_FtsZ-bd_C_sf"/>
</dbReference>
<dbReference type="NCBIfam" id="TIGR02205">
    <property type="entry name" value="septum_zipA"/>
    <property type="match status" value="1"/>
</dbReference>
<dbReference type="PANTHER" id="PTHR38685">
    <property type="entry name" value="CELL DIVISION PROTEIN ZIPA"/>
    <property type="match status" value="1"/>
</dbReference>
<dbReference type="PANTHER" id="PTHR38685:SF1">
    <property type="entry name" value="CELL DIVISION PROTEIN ZIPA"/>
    <property type="match status" value="1"/>
</dbReference>
<dbReference type="Pfam" id="PF04354">
    <property type="entry name" value="ZipA_C"/>
    <property type="match status" value="1"/>
</dbReference>
<dbReference type="SMART" id="SM00771">
    <property type="entry name" value="ZipA_C"/>
    <property type="match status" value="1"/>
</dbReference>
<dbReference type="SUPFAM" id="SSF64383">
    <property type="entry name" value="Cell-division protein ZipA, C-terminal domain"/>
    <property type="match status" value="1"/>
</dbReference>
<reference key="1">
    <citation type="journal article" date="2008" name="PLoS Genet.">
        <title>Complete genome sequence of the N2-fixing broad host range endophyte Klebsiella pneumoniae 342 and virulence predictions verified in mice.</title>
        <authorList>
            <person name="Fouts D.E."/>
            <person name="Tyler H.L."/>
            <person name="DeBoy R.T."/>
            <person name="Daugherty S."/>
            <person name="Ren Q."/>
            <person name="Badger J.H."/>
            <person name="Durkin A.S."/>
            <person name="Huot H."/>
            <person name="Shrivastava S."/>
            <person name="Kothari S."/>
            <person name="Dodson R.J."/>
            <person name="Mohamoud Y."/>
            <person name="Khouri H."/>
            <person name="Roesch L.F.W."/>
            <person name="Krogfelt K.A."/>
            <person name="Struve C."/>
            <person name="Triplett E.W."/>
            <person name="Methe B.A."/>
        </authorList>
    </citation>
    <scope>NUCLEOTIDE SEQUENCE [LARGE SCALE GENOMIC DNA]</scope>
    <source>
        <strain>342</strain>
    </source>
</reference>
<organism>
    <name type="scientific">Klebsiella pneumoniae (strain 342)</name>
    <dbReference type="NCBI Taxonomy" id="507522"/>
    <lineage>
        <taxon>Bacteria</taxon>
        <taxon>Pseudomonadati</taxon>
        <taxon>Pseudomonadota</taxon>
        <taxon>Gammaproteobacteria</taxon>
        <taxon>Enterobacterales</taxon>
        <taxon>Enterobacteriaceae</taxon>
        <taxon>Klebsiella/Raoultella group</taxon>
        <taxon>Klebsiella</taxon>
        <taxon>Klebsiella pneumoniae complex</taxon>
    </lineage>
</organism>
<sequence length="354" mass="39403">MMQDLRLILIIVGAIAIIALLVHGFWTSRKERSSMFRDRPLKRMKSRDDESENEDFDDNVEGVGEVRVHPVTHAPHGAHGEHEAPRQAPQHQYQPPYERQMQQPVRPDEPVRQPQQSPRQAPVQPQGQQPVPHAAPQPGWQQPQPAQPPVQPQHQPQPVVQQPVAPQPVTPTVAQPQPAAPQQPVPQPVAAPQPAVAEPQPVEPQQPAAPQPKERKETVIVMNVAAHHGAQLNGEVLINSIQQAGFKFGEMNIFHRHLSPDGSGPVLFSLANMVKPGTFNPDSMADMMTPGVTIFMQVPSYGDELQNFKLMLQSAQYIADEVGGVVLDDQRRMMTPQKLREYQDRIREVKDANA</sequence>
<name>ZIPA_KLEP3</name>
<keyword id="KW-0131">Cell cycle</keyword>
<keyword id="KW-0132">Cell division</keyword>
<keyword id="KW-0997">Cell inner membrane</keyword>
<keyword id="KW-1003">Cell membrane</keyword>
<keyword id="KW-0472">Membrane</keyword>
<keyword id="KW-0812">Transmembrane</keyword>
<keyword id="KW-1133">Transmembrane helix</keyword>
<protein>
    <recommendedName>
        <fullName evidence="1">Cell division protein ZipA</fullName>
    </recommendedName>
</protein>
<evidence type="ECO:0000255" key="1">
    <source>
        <dbReference type="HAMAP-Rule" id="MF_00509"/>
    </source>
</evidence>
<evidence type="ECO:0000256" key="2">
    <source>
        <dbReference type="SAM" id="MobiDB-lite"/>
    </source>
</evidence>